<proteinExistence type="evidence at protein level"/>
<reference key="1">
    <citation type="journal article" date="1998" name="Nature">
        <title>Deciphering the biology of Mycobacterium tuberculosis from the complete genome sequence.</title>
        <authorList>
            <person name="Cole S.T."/>
            <person name="Brosch R."/>
            <person name="Parkhill J."/>
            <person name="Garnier T."/>
            <person name="Churcher C.M."/>
            <person name="Harris D.E."/>
            <person name="Gordon S.V."/>
            <person name="Eiglmeier K."/>
            <person name="Gas S."/>
            <person name="Barry C.E. III"/>
            <person name="Tekaia F."/>
            <person name="Badcock K."/>
            <person name="Basham D."/>
            <person name="Brown D."/>
            <person name="Chillingworth T."/>
            <person name="Connor R."/>
            <person name="Davies R.M."/>
            <person name="Devlin K."/>
            <person name="Feltwell T."/>
            <person name="Gentles S."/>
            <person name="Hamlin N."/>
            <person name="Holroyd S."/>
            <person name="Hornsby T."/>
            <person name="Jagels K."/>
            <person name="Krogh A."/>
            <person name="McLean J."/>
            <person name="Moule S."/>
            <person name="Murphy L.D."/>
            <person name="Oliver S."/>
            <person name="Osborne J."/>
            <person name="Quail M.A."/>
            <person name="Rajandream M.A."/>
            <person name="Rogers J."/>
            <person name="Rutter S."/>
            <person name="Seeger K."/>
            <person name="Skelton S."/>
            <person name="Squares S."/>
            <person name="Squares R."/>
            <person name="Sulston J.E."/>
            <person name="Taylor K."/>
            <person name="Whitehead S."/>
            <person name="Barrell B.G."/>
        </authorList>
    </citation>
    <scope>NUCLEOTIDE SEQUENCE [LARGE SCALE GENOMIC DNA]</scope>
    <source>
        <strain>ATCC 25618 / H37Rv</strain>
    </source>
</reference>
<reference key="2">
    <citation type="journal article" date="2008" name="BMC Syst. Biol.">
        <title>targetTB: a target identification pipeline for Mycobacterium tuberculosis through an interactome, reactome and genome-scale structural analysis.</title>
        <authorList>
            <person name="Raman K."/>
            <person name="Yeturu K."/>
            <person name="Chandra N."/>
        </authorList>
    </citation>
    <scope>IDENTIFICATION AS A DRUG TARGET [LARGE SCALE ANALYSIS]</scope>
</reference>
<reference key="3">
    <citation type="journal article" date="2011" name="Mol. Cell. Proteomics">
        <title>Proteogenomic analysis of Mycobacterium tuberculosis by high resolution mass spectrometry.</title>
        <authorList>
            <person name="Kelkar D.S."/>
            <person name="Kumar D."/>
            <person name="Kumar P."/>
            <person name="Balakrishnan L."/>
            <person name="Muthusamy B."/>
            <person name="Yadav A.K."/>
            <person name="Shrivastava P."/>
            <person name="Marimuthu A."/>
            <person name="Anand S."/>
            <person name="Sundaram H."/>
            <person name="Kingsbury R."/>
            <person name="Harsha H.C."/>
            <person name="Nair B."/>
            <person name="Prasad T.S."/>
            <person name="Chauhan D.S."/>
            <person name="Katoch K."/>
            <person name="Katoch V.M."/>
            <person name="Kumar P."/>
            <person name="Chaerkady R."/>
            <person name="Ramachandran S."/>
            <person name="Dash D."/>
            <person name="Pandey A."/>
        </authorList>
    </citation>
    <scope>IDENTIFICATION BY MASS SPECTROMETRY [LARGE SCALE ANALYSIS]</scope>
    <source>
        <strain>ATCC 25618 / H37Rv</strain>
    </source>
</reference>
<protein>
    <recommendedName>
        <fullName>Uncharacterized methyltransferase Rv0224c</fullName>
        <ecNumber>2.1.1.-</ecNumber>
    </recommendedName>
</protein>
<dbReference type="EC" id="2.1.1.-"/>
<dbReference type="EMBL" id="AL123456">
    <property type="protein sequence ID" value="CCP42952.1"/>
    <property type="molecule type" value="Genomic_DNA"/>
</dbReference>
<dbReference type="PIR" id="F70961">
    <property type="entry name" value="F70961"/>
</dbReference>
<dbReference type="RefSeq" id="NP_214738.1">
    <property type="nucleotide sequence ID" value="NC_000962.3"/>
</dbReference>
<dbReference type="RefSeq" id="WP_003401240.1">
    <property type="nucleotide sequence ID" value="NZ_NVQJ01000001.1"/>
</dbReference>
<dbReference type="STRING" id="83332.Rv0224c"/>
<dbReference type="PaxDb" id="83332-Rv0224c"/>
<dbReference type="DNASU" id="886715"/>
<dbReference type="GeneID" id="886715"/>
<dbReference type="KEGG" id="mtu:Rv0224c"/>
<dbReference type="KEGG" id="mtv:RVBD_0224c"/>
<dbReference type="TubercuList" id="Rv0224c"/>
<dbReference type="eggNOG" id="COG0500">
    <property type="taxonomic scope" value="Bacteria"/>
</dbReference>
<dbReference type="InParanoid" id="P9WJZ9"/>
<dbReference type="OrthoDB" id="3206826at2"/>
<dbReference type="PhylomeDB" id="P9WJZ9"/>
<dbReference type="Proteomes" id="UP000001584">
    <property type="component" value="Chromosome"/>
</dbReference>
<dbReference type="GO" id="GO:0008757">
    <property type="term" value="F:S-adenosylmethionine-dependent methyltransferase activity"/>
    <property type="evidence" value="ECO:0007669"/>
    <property type="project" value="InterPro"/>
</dbReference>
<dbReference type="GO" id="GO:0032259">
    <property type="term" value="P:methylation"/>
    <property type="evidence" value="ECO:0007669"/>
    <property type="project" value="UniProtKB-KW"/>
</dbReference>
<dbReference type="CDD" id="cd02440">
    <property type="entry name" value="AdoMet_MTases"/>
    <property type="match status" value="1"/>
</dbReference>
<dbReference type="Gene3D" id="3.40.50.150">
    <property type="entry name" value="Vaccinia Virus protein VP39"/>
    <property type="match status" value="1"/>
</dbReference>
<dbReference type="InterPro" id="IPR013216">
    <property type="entry name" value="Methyltransf_11"/>
</dbReference>
<dbReference type="InterPro" id="IPR029063">
    <property type="entry name" value="SAM-dependent_MTases_sf"/>
</dbReference>
<dbReference type="PANTHER" id="PTHR43591:SF24">
    <property type="entry name" value="2-METHOXY-6-POLYPRENYL-1,4-BENZOQUINOL METHYLASE, MITOCHONDRIAL"/>
    <property type="match status" value="1"/>
</dbReference>
<dbReference type="PANTHER" id="PTHR43591">
    <property type="entry name" value="METHYLTRANSFERASE"/>
    <property type="match status" value="1"/>
</dbReference>
<dbReference type="Pfam" id="PF08241">
    <property type="entry name" value="Methyltransf_11"/>
    <property type="match status" value="1"/>
</dbReference>
<dbReference type="SUPFAM" id="SSF53335">
    <property type="entry name" value="S-adenosyl-L-methionine-dependent methyltransferases"/>
    <property type="match status" value="1"/>
</dbReference>
<keyword id="KW-0489">Methyltransferase</keyword>
<keyword id="KW-1185">Reference proteome</keyword>
<keyword id="KW-0808">Transferase</keyword>
<feature type="chain" id="PRO_0000380608" description="Uncharacterized methyltransferase Rv0224c">
    <location>
        <begin position="1"/>
        <end position="254"/>
    </location>
</feature>
<sequence>MAVTDVFARRATLRRSLRLLADFRYEQRDPARFYRTLAADTAAMIGDLWLATHSEPPVGRTLLDVGGGPGYFATAFSDAGVGYIGVEPDPDEMHAAGPAFTGRPGMFVRASGMALPFADDSVDICLSSNVAEHVPRPWQLGTEMLRVTKPGGLVVLSYTVWLGPFGGHEMGLSHYLGGARAAARYVRKHGHPAKNNYGSSLFAVSAAEGLRWAAGTGAALAVFPRYHPRWAWWLTSVPVLREFLVSNLVLVLTP</sequence>
<evidence type="ECO:0000305" key="1"/>
<gene>
    <name type="ordered locus">Rv0224c</name>
</gene>
<name>Y224_MYCTU</name>
<comment type="miscellaneous">
    <text>Was identified as a high-confidence drug target.</text>
</comment>
<comment type="similarity">
    <text evidence="1">Belongs to the methyltransferase superfamily.</text>
</comment>
<organism>
    <name type="scientific">Mycobacterium tuberculosis (strain ATCC 25618 / H37Rv)</name>
    <dbReference type="NCBI Taxonomy" id="83332"/>
    <lineage>
        <taxon>Bacteria</taxon>
        <taxon>Bacillati</taxon>
        <taxon>Actinomycetota</taxon>
        <taxon>Actinomycetes</taxon>
        <taxon>Mycobacteriales</taxon>
        <taxon>Mycobacteriaceae</taxon>
        <taxon>Mycobacterium</taxon>
        <taxon>Mycobacterium tuberculosis complex</taxon>
    </lineage>
</organism>
<accession>P9WJZ9</accession>
<accession>L0T5V2</accession>
<accession>P96406</accession>
<accession>Q7DA86</accession>